<keyword id="KW-0227">DNA damage</keyword>
<keyword id="KW-0233">DNA recombination</keyword>
<keyword id="KW-0234">DNA repair</keyword>
<keyword id="KW-0479">Metal-binding</keyword>
<keyword id="KW-0862">Zinc</keyword>
<keyword id="KW-0863">Zinc-finger</keyword>
<organism>
    <name type="scientific">Bordetella bronchiseptica (strain ATCC BAA-588 / NCTC 13252 / RB50)</name>
    <name type="common">Alcaligenes bronchisepticus</name>
    <dbReference type="NCBI Taxonomy" id="257310"/>
    <lineage>
        <taxon>Bacteria</taxon>
        <taxon>Pseudomonadati</taxon>
        <taxon>Pseudomonadota</taxon>
        <taxon>Betaproteobacteria</taxon>
        <taxon>Burkholderiales</taxon>
        <taxon>Alcaligenaceae</taxon>
        <taxon>Bordetella</taxon>
    </lineage>
</organism>
<name>RECR_BORBR</name>
<accession>Q7WMF1</accession>
<gene>
    <name evidence="1" type="primary">recR</name>
    <name type="ordered locus">BB1440</name>
</gene>
<dbReference type="EMBL" id="BX640441">
    <property type="protein sequence ID" value="CAE31938.1"/>
    <property type="molecule type" value="Genomic_DNA"/>
</dbReference>
<dbReference type="RefSeq" id="WP_003809574.1">
    <property type="nucleotide sequence ID" value="NC_002927.3"/>
</dbReference>
<dbReference type="SMR" id="Q7WMF1"/>
<dbReference type="GeneID" id="93202980"/>
<dbReference type="KEGG" id="bbr:BB1440"/>
<dbReference type="eggNOG" id="COG0353">
    <property type="taxonomic scope" value="Bacteria"/>
</dbReference>
<dbReference type="HOGENOM" id="CLU_060739_1_2_4"/>
<dbReference type="Proteomes" id="UP000001027">
    <property type="component" value="Chromosome"/>
</dbReference>
<dbReference type="GO" id="GO:0003677">
    <property type="term" value="F:DNA binding"/>
    <property type="evidence" value="ECO:0007669"/>
    <property type="project" value="UniProtKB-UniRule"/>
</dbReference>
<dbReference type="GO" id="GO:0008270">
    <property type="term" value="F:zinc ion binding"/>
    <property type="evidence" value="ECO:0007669"/>
    <property type="project" value="UniProtKB-KW"/>
</dbReference>
<dbReference type="GO" id="GO:0006310">
    <property type="term" value="P:DNA recombination"/>
    <property type="evidence" value="ECO:0007669"/>
    <property type="project" value="UniProtKB-UniRule"/>
</dbReference>
<dbReference type="GO" id="GO:0006281">
    <property type="term" value="P:DNA repair"/>
    <property type="evidence" value="ECO:0007669"/>
    <property type="project" value="UniProtKB-UniRule"/>
</dbReference>
<dbReference type="CDD" id="cd01025">
    <property type="entry name" value="TOPRIM_recR"/>
    <property type="match status" value="1"/>
</dbReference>
<dbReference type="Gene3D" id="3.40.1360.10">
    <property type="match status" value="1"/>
</dbReference>
<dbReference type="Gene3D" id="1.10.8.420">
    <property type="entry name" value="RecR Domain 1"/>
    <property type="match status" value="1"/>
</dbReference>
<dbReference type="HAMAP" id="MF_00017">
    <property type="entry name" value="RecR"/>
    <property type="match status" value="1"/>
</dbReference>
<dbReference type="InterPro" id="IPR000093">
    <property type="entry name" value="DNA_Rcmb_RecR"/>
</dbReference>
<dbReference type="InterPro" id="IPR023627">
    <property type="entry name" value="Rcmb_RecR"/>
</dbReference>
<dbReference type="InterPro" id="IPR015967">
    <property type="entry name" value="Rcmb_RecR_Znf"/>
</dbReference>
<dbReference type="InterPro" id="IPR006171">
    <property type="entry name" value="TOPRIM_dom"/>
</dbReference>
<dbReference type="InterPro" id="IPR034137">
    <property type="entry name" value="TOPRIM_RecR"/>
</dbReference>
<dbReference type="NCBIfam" id="TIGR00615">
    <property type="entry name" value="recR"/>
    <property type="match status" value="1"/>
</dbReference>
<dbReference type="PANTHER" id="PTHR30446">
    <property type="entry name" value="RECOMBINATION PROTEIN RECR"/>
    <property type="match status" value="1"/>
</dbReference>
<dbReference type="PANTHER" id="PTHR30446:SF0">
    <property type="entry name" value="RECOMBINATION PROTEIN RECR"/>
    <property type="match status" value="1"/>
</dbReference>
<dbReference type="Pfam" id="PF21175">
    <property type="entry name" value="RecR_C"/>
    <property type="match status" value="1"/>
</dbReference>
<dbReference type="Pfam" id="PF21176">
    <property type="entry name" value="RecR_HhH"/>
    <property type="match status" value="1"/>
</dbReference>
<dbReference type="Pfam" id="PF02132">
    <property type="entry name" value="RecR_ZnF"/>
    <property type="match status" value="1"/>
</dbReference>
<dbReference type="Pfam" id="PF13662">
    <property type="entry name" value="Toprim_4"/>
    <property type="match status" value="1"/>
</dbReference>
<dbReference type="SMART" id="SM00493">
    <property type="entry name" value="TOPRIM"/>
    <property type="match status" value="1"/>
</dbReference>
<dbReference type="SUPFAM" id="SSF111304">
    <property type="entry name" value="Recombination protein RecR"/>
    <property type="match status" value="1"/>
</dbReference>
<dbReference type="PROSITE" id="PS50880">
    <property type="entry name" value="TOPRIM"/>
    <property type="match status" value="1"/>
</dbReference>
<proteinExistence type="inferred from homology"/>
<sequence length="202" mass="22136">MDPQLPEPEPLIALIEALRRLPGVGVRSARRMAYHLLQHDLQGADMLGRALSGAVQHLRHCARCNSFTEDEVCATCANPKRDPGLLCIVETPADQNMIESSHGYRGLYYVLMGRIAPLEGVGPRELDFQRVIERACDGVVQEVILATNFTAEGETTAHFLGDALSERGLKVTRLARGVPAGSELEYVDAGTIAWALMERRST</sequence>
<feature type="chain" id="PRO_0000190289" description="Recombination protein RecR">
    <location>
        <begin position="1"/>
        <end position="202"/>
    </location>
</feature>
<feature type="domain" description="Toprim" evidence="1">
    <location>
        <begin position="84"/>
        <end position="179"/>
    </location>
</feature>
<feature type="zinc finger region" description="C4-type" evidence="1">
    <location>
        <begin position="61"/>
        <end position="76"/>
    </location>
</feature>
<protein>
    <recommendedName>
        <fullName evidence="1">Recombination protein RecR</fullName>
    </recommendedName>
</protein>
<reference key="1">
    <citation type="journal article" date="2003" name="Nat. Genet.">
        <title>Comparative analysis of the genome sequences of Bordetella pertussis, Bordetella parapertussis and Bordetella bronchiseptica.</title>
        <authorList>
            <person name="Parkhill J."/>
            <person name="Sebaihia M."/>
            <person name="Preston A."/>
            <person name="Murphy L.D."/>
            <person name="Thomson N.R."/>
            <person name="Harris D.E."/>
            <person name="Holden M.T.G."/>
            <person name="Churcher C.M."/>
            <person name="Bentley S.D."/>
            <person name="Mungall K.L."/>
            <person name="Cerdeno-Tarraga A.-M."/>
            <person name="Temple L."/>
            <person name="James K.D."/>
            <person name="Harris B."/>
            <person name="Quail M.A."/>
            <person name="Achtman M."/>
            <person name="Atkin R."/>
            <person name="Baker S."/>
            <person name="Basham D."/>
            <person name="Bason N."/>
            <person name="Cherevach I."/>
            <person name="Chillingworth T."/>
            <person name="Collins M."/>
            <person name="Cronin A."/>
            <person name="Davis P."/>
            <person name="Doggett J."/>
            <person name="Feltwell T."/>
            <person name="Goble A."/>
            <person name="Hamlin N."/>
            <person name="Hauser H."/>
            <person name="Holroyd S."/>
            <person name="Jagels K."/>
            <person name="Leather S."/>
            <person name="Moule S."/>
            <person name="Norberczak H."/>
            <person name="O'Neil S."/>
            <person name="Ormond D."/>
            <person name="Price C."/>
            <person name="Rabbinowitsch E."/>
            <person name="Rutter S."/>
            <person name="Sanders M."/>
            <person name="Saunders D."/>
            <person name="Seeger K."/>
            <person name="Sharp S."/>
            <person name="Simmonds M."/>
            <person name="Skelton J."/>
            <person name="Squares R."/>
            <person name="Squares S."/>
            <person name="Stevens K."/>
            <person name="Unwin L."/>
            <person name="Whitehead S."/>
            <person name="Barrell B.G."/>
            <person name="Maskell D.J."/>
        </authorList>
    </citation>
    <scope>NUCLEOTIDE SEQUENCE [LARGE SCALE GENOMIC DNA]</scope>
    <source>
        <strain>ATCC BAA-588 / NCTC 13252 / RB50</strain>
    </source>
</reference>
<comment type="function">
    <text evidence="1">May play a role in DNA repair. It seems to be involved in an RecBC-independent recombinational process of DNA repair. It may act with RecF and RecO.</text>
</comment>
<comment type="similarity">
    <text evidence="1">Belongs to the RecR family.</text>
</comment>
<evidence type="ECO:0000255" key="1">
    <source>
        <dbReference type="HAMAP-Rule" id="MF_00017"/>
    </source>
</evidence>